<name>HSLO_STAAR</name>
<comment type="function">
    <text evidence="1">Redox regulated molecular chaperone. Protects both thermally unfolding and oxidatively damaged proteins from irreversible aggregation. Plays an important role in the bacterial defense system toward oxidative stress.</text>
</comment>
<comment type="subcellular location">
    <subcellularLocation>
        <location evidence="1">Cytoplasm</location>
    </subcellularLocation>
</comment>
<comment type="PTM">
    <text evidence="1">Under oxidizing conditions two disulfide bonds are formed involving the reactive cysteines. Under reducing conditions zinc is bound to the reactive cysteines and the protein is inactive.</text>
</comment>
<comment type="similarity">
    <text evidence="1">Belongs to the HSP33 family.</text>
</comment>
<dbReference type="EMBL" id="BX571856">
    <property type="protein sequence ID" value="CAG39535.1"/>
    <property type="molecule type" value="Genomic_DNA"/>
</dbReference>
<dbReference type="RefSeq" id="WP_000148605.1">
    <property type="nucleotide sequence ID" value="NC_002952.2"/>
</dbReference>
<dbReference type="SMR" id="Q6GJF9"/>
<dbReference type="KEGG" id="sar:SAR0513"/>
<dbReference type="HOGENOM" id="CLU_054493_1_0_9"/>
<dbReference type="Proteomes" id="UP000000596">
    <property type="component" value="Chromosome"/>
</dbReference>
<dbReference type="GO" id="GO:0005737">
    <property type="term" value="C:cytoplasm"/>
    <property type="evidence" value="ECO:0007669"/>
    <property type="project" value="UniProtKB-SubCell"/>
</dbReference>
<dbReference type="GO" id="GO:0044183">
    <property type="term" value="F:protein folding chaperone"/>
    <property type="evidence" value="ECO:0007669"/>
    <property type="project" value="TreeGrafter"/>
</dbReference>
<dbReference type="GO" id="GO:0051082">
    <property type="term" value="F:unfolded protein binding"/>
    <property type="evidence" value="ECO:0007669"/>
    <property type="project" value="UniProtKB-UniRule"/>
</dbReference>
<dbReference type="GO" id="GO:0042026">
    <property type="term" value="P:protein refolding"/>
    <property type="evidence" value="ECO:0007669"/>
    <property type="project" value="TreeGrafter"/>
</dbReference>
<dbReference type="CDD" id="cd00498">
    <property type="entry name" value="Hsp33"/>
    <property type="match status" value="1"/>
</dbReference>
<dbReference type="Gene3D" id="3.55.30.10">
    <property type="entry name" value="Hsp33 domain"/>
    <property type="match status" value="1"/>
</dbReference>
<dbReference type="Gene3D" id="3.90.1280.10">
    <property type="entry name" value="HSP33 redox switch-like"/>
    <property type="match status" value="1"/>
</dbReference>
<dbReference type="HAMAP" id="MF_00117">
    <property type="entry name" value="HslO"/>
    <property type="match status" value="1"/>
</dbReference>
<dbReference type="InterPro" id="IPR000397">
    <property type="entry name" value="Heat_shock_Hsp33"/>
</dbReference>
<dbReference type="InterPro" id="IPR016154">
    <property type="entry name" value="Heat_shock_Hsp33_C"/>
</dbReference>
<dbReference type="InterPro" id="IPR016153">
    <property type="entry name" value="Heat_shock_Hsp33_N"/>
</dbReference>
<dbReference type="NCBIfam" id="NF001033">
    <property type="entry name" value="PRK00114.1"/>
    <property type="match status" value="1"/>
</dbReference>
<dbReference type="PANTHER" id="PTHR30111">
    <property type="entry name" value="33 KDA CHAPERONIN"/>
    <property type="match status" value="1"/>
</dbReference>
<dbReference type="PANTHER" id="PTHR30111:SF1">
    <property type="entry name" value="33 KDA CHAPERONIN"/>
    <property type="match status" value="1"/>
</dbReference>
<dbReference type="Pfam" id="PF01430">
    <property type="entry name" value="HSP33"/>
    <property type="match status" value="1"/>
</dbReference>
<dbReference type="PIRSF" id="PIRSF005261">
    <property type="entry name" value="Heat_shock_Hsp33"/>
    <property type="match status" value="1"/>
</dbReference>
<dbReference type="SUPFAM" id="SSF64397">
    <property type="entry name" value="Hsp33 domain"/>
    <property type="match status" value="1"/>
</dbReference>
<dbReference type="SUPFAM" id="SSF118352">
    <property type="entry name" value="HSP33 redox switch-like"/>
    <property type="match status" value="1"/>
</dbReference>
<feature type="chain" id="PRO_0000192202" description="33 kDa chaperonin">
    <location>
        <begin position="1"/>
        <end position="293"/>
    </location>
</feature>
<feature type="disulfide bond" description="Redox-active" evidence="1">
    <location>
        <begin position="238"/>
        <end position="240"/>
    </location>
</feature>
<feature type="disulfide bond" description="Redox-active" evidence="1">
    <location>
        <begin position="271"/>
        <end position="274"/>
    </location>
</feature>
<reference key="1">
    <citation type="journal article" date="2004" name="Proc. Natl. Acad. Sci. U.S.A.">
        <title>Complete genomes of two clinical Staphylococcus aureus strains: evidence for the rapid evolution of virulence and drug resistance.</title>
        <authorList>
            <person name="Holden M.T.G."/>
            <person name="Feil E.J."/>
            <person name="Lindsay J.A."/>
            <person name="Peacock S.J."/>
            <person name="Day N.P.J."/>
            <person name="Enright M.C."/>
            <person name="Foster T.J."/>
            <person name="Moore C.E."/>
            <person name="Hurst L."/>
            <person name="Atkin R."/>
            <person name="Barron A."/>
            <person name="Bason N."/>
            <person name="Bentley S.D."/>
            <person name="Chillingworth C."/>
            <person name="Chillingworth T."/>
            <person name="Churcher C."/>
            <person name="Clark L."/>
            <person name="Corton C."/>
            <person name="Cronin A."/>
            <person name="Doggett J."/>
            <person name="Dowd L."/>
            <person name="Feltwell T."/>
            <person name="Hance Z."/>
            <person name="Harris B."/>
            <person name="Hauser H."/>
            <person name="Holroyd S."/>
            <person name="Jagels K."/>
            <person name="James K.D."/>
            <person name="Lennard N."/>
            <person name="Line A."/>
            <person name="Mayes R."/>
            <person name="Moule S."/>
            <person name="Mungall K."/>
            <person name="Ormond D."/>
            <person name="Quail M.A."/>
            <person name="Rabbinowitsch E."/>
            <person name="Rutherford K.M."/>
            <person name="Sanders M."/>
            <person name="Sharp S."/>
            <person name="Simmonds M."/>
            <person name="Stevens K."/>
            <person name="Whitehead S."/>
            <person name="Barrell B.G."/>
            <person name="Spratt B.G."/>
            <person name="Parkhill J."/>
        </authorList>
    </citation>
    <scope>NUCLEOTIDE SEQUENCE [LARGE SCALE GENOMIC DNA]</scope>
    <source>
        <strain>MRSA252</strain>
    </source>
</reference>
<gene>
    <name evidence="1" type="primary">hslO</name>
    <name type="ordered locus">SAR0513</name>
</gene>
<proteinExistence type="inferred from homology"/>
<evidence type="ECO:0000255" key="1">
    <source>
        <dbReference type="HAMAP-Rule" id="MF_00117"/>
    </source>
</evidence>
<accession>Q6GJF9</accession>
<sequence>MTHDYIVKALAFDGEIRAYAALTTETVQEAQTRHYTWPTASAAMGRTMTATAMMGAMLKGDQKLTVTVDGQGPIGRIIADANAKGEVRAYVDHPQTHFPLNEQGKLDVRRAVGTNGSIMVVKDVGMKDYFSGASPIVSGELGEDFTYYYATSEQTPSSVGLGVLVNPDNTIKAAGGFIIQVMPGAKDETISKLEKAISEMTPVSKLIEQGLTPEGLLNEILGEDHVQILEKMPVQFECNCSHEKFLNAIKGLGEAEIQNMIKEDHGAEAVCHFCGNKYKYTEEELNVLLESLA</sequence>
<protein>
    <recommendedName>
        <fullName evidence="1">33 kDa chaperonin</fullName>
    </recommendedName>
    <alternativeName>
        <fullName evidence="1">Heat shock protein 33 homolog</fullName>
        <shortName evidence="1">HSP33</shortName>
    </alternativeName>
</protein>
<keyword id="KW-0143">Chaperone</keyword>
<keyword id="KW-0963">Cytoplasm</keyword>
<keyword id="KW-1015">Disulfide bond</keyword>
<keyword id="KW-0676">Redox-active center</keyword>
<keyword id="KW-0862">Zinc</keyword>
<organism>
    <name type="scientific">Staphylococcus aureus (strain MRSA252)</name>
    <dbReference type="NCBI Taxonomy" id="282458"/>
    <lineage>
        <taxon>Bacteria</taxon>
        <taxon>Bacillati</taxon>
        <taxon>Bacillota</taxon>
        <taxon>Bacilli</taxon>
        <taxon>Bacillales</taxon>
        <taxon>Staphylococcaceae</taxon>
        <taxon>Staphylococcus</taxon>
    </lineage>
</organism>